<keyword id="KW-1003">Cell membrane</keyword>
<keyword id="KW-0966">Cell projection</keyword>
<keyword id="KW-0969">Cilium</keyword>
<keyword id="KW-0963">Cytoplasm</keyword>
<keyword id="KW-0968">Cytoplasmic vesicle</keyword>
<keyword id="KW-0903">Direct protein sequencing</keyword>
<keyword id="KW-1015">Disulfide bond</keyword>
<keyword id="KW-0282">Flagellum</keyword>
<keyword id="KW-0325">Glycoprotein</keyword>
<keyword id="KW-0407">Ion channel</keyword>
<keyword id="KW-0406">Ion transport</keyword>
<keyword id="KW-0472">Membrane</keyword>
<keyword id="KW-1185">Reference proteome</keyword>
<keyword id="KW-0915">Sodium</keyword>
<keyword id="KW-0894">Sodium channel</keyword>
<keyword id="KW-0739">Sodium transport</keyword>
<keyword id="KW-0812">Transmembrane</keyword>
<keyword id="KW-1133">Transmembrane helix</keyword>
<keyword id="KW-0813">Transport</keyword>
<keyword id="KW-0832">Ubl conjugation</keyword>
<sequence length="699" mass="78893">MLDHTRAPELNLDLDLDVSNSPKGSMKGNNFKEQDLCPPLPMQGLGKGDKREEQALGPEPSEPRQPTEEEEALIEFHRSYRELFQFFCNNTTIHGAIRLVCSKHNRMKTAFWAVLWLCTFGMMYWQFALLFEEYFSYPVSLNINLNSDKLVFPAVTVCTLNPYRYTEIKEDLEELDRITEQTLFDLYKYNSSYTRQAGGRRRSTRDLRGALPHPLQRLRTPPPPNPARSARSASSSVRDNNPQVDRKDWKIGFQLCNQNKSDCFYQTYSSGVDAVREWYRFHYINILSRLPDTSPALEEEALGSFIFTCRFNQAPCNQANYSQFHHPMYGNCYTFNNKNNSNLWMSSMPGVNNGLSLTLRTEQNDFIPLLSTVTGARVMVHGQDEPAFMDDGGFNVRPGVETSISMRKEALDSLGGNYGDCTENGSDVPVKNLYPSKYTQQVCIHSCFQENMIKKCGCAYIFYPKPKGVEFCDYLKQSSWGYCYYKLQAAFSLDSLGCFSKCRKPCSVTNYKLSAGYSRWPSVKSQDWIFEMLSLQNNYTINNKRNGVAKLNIFFKELNYKTNSESPSVTMVSLLSNLGSQWSLWFGSSVLSVVEMAELIFDLLVITLIMLLHRFRSRYWSPGRGARGAREVASTPASSFPSRFCPHPTSPPPSLPQQGTTPPLALTAPPPAYATLGPSASPLDSAVPGSSACAPAMAL</sequence>
<evidence type="ECO:0000250" key="1">
    <source>
        <dbReference type="UniProtKB" id="P37088"/>
    </source>
</evidence>
<evidence type="ECO:0000250" key="2">
    <source>
        <dbReference type="UniProtKB" id="P37089"/>
    </source>
</evidence>
<evidence type="ECO:0000255" key="3"/>
<evidence type="ECO:0000256" key="4">
    <source>
        <dbReference type="SAM" id="MobiDB-lite"/>
    </source>
</evidence>
<evidence type="ECO:0000269" key="5">
    <source>
    </source>
</evidence>
<evidence type="ECO:0000269" key="6">
    <source>
    </source>
</evidence>
<evidence type="ECO:0000269" key="7">
    <source>
    </source>
</evidence>
<evidence type="ECO:0000269" key="8">
    <source>
    </source>
</evidence>
<evidence type="ECO:0000269" key="9">
    <source>
    </source>
</evidence>
<evidence type="ECO:0000269" key="10">
    <source>
    </source>
</evidence>
<evidence type="ECO:0000269" key="11">
    <source>
    </source>
</evidence>
<evidence type="ECO:0000269" key="12">
    <source>
    </source>
</evidence>
<evidence type="ECO:0000269" key="13">
    <source>
    </source>
</evidence>
<evidence type="ECO:0000269" key="14">
    <source>
    </source>
</evidence>
<evidence type="ECO:0000269" key="15">
    <source>
    </source>
</evidence>
<evidence type="ECO:0000303" key="16">
    <source>
    </source>
</evidence>
<evidence type="ECO:0000305" key="17"/>
<evidence type="ECO:0000305" key="18">
    <source>
    </source>
</evidence>
<evidence type="ECO:0000305" key="19">
    <source>
    </source>
</evidence>
<evidence type="ECO:0000312" key="20">
    <source>
        <dbReference type="MGI" id="MGI:101782"/>
    </source>
</evidence>
<protein>
    <recommendedName>
        <fullName evidence="18">Epithelial sodium channel subunit alpha</fullName>
        <shortName evidence="16">Alpha-ENaC</shortName>
        <shortName evidence="16">Epithelial Na(+) channel subunit alpha</shortName>
    </recommendedName>
    <alternativeName>
        <fullName>Alpha-NaCH</fullName>
    </alternativeName>
    <alternativeName>
        <fullName evidence="1">Amiloride-sensitive sodium channel subunit alpha</fullName>
    </alternativeName>
    <alternativeName>
        <fullName>Nonvoltage-gated sodium channel 1 subunit alpha</fullName>
    </alternativeName>
    <alternativeName>
        <fullName>SCNEA</fullName>
    </alternativeName>
</protein>
<accession>Q61180</accession>
<accession>Q9WU37</accession>
<gene>
    <name evidence="20" type="primary">Scnn1a</name>
</gene>
<feature type="chain" id="PRO_0000181262" description="Epithelial sodium channel subunit alpha">
    <location>
        <begin position="1"/>
        <end position="699"/>
    </location>
</feature>
<feature type="topological domain" description="Cytoplasmic" evidence="2">
    <location>
        <begin position="1"/>
        <end position="110"/>
    </location>
</feature>
<feature type="transmembrane region" description="Helical; Name=1" evidence="3">
    <location>
        <begin position="111"/>
        <end position="131"/>
    </location>
</feature>
<feature type="topological domain" description="Extracellular" evidence="2">
    <location>
        <begin position="132"/>
        <end position="589"/>
    </location>
</feature>
<feature type="transmembrane region" description="Helical; Name=2" evidence="3">
    <location>
        <begin position="590"/>
        <end position="610"/>
    </location>
</feature>
<feature type="topological domain" description="Cytoplasmic" evidence="2">
    <location>
        <begin position="611"/>
        <end position="699"/>
    </location>
</feature>
<feature type="region of interest" description="Disordered" evidence="4">
    <location>
        <begin position="1"/>
        <end position="71"/>
    </location>
</feature>
<feature type="region of interest" description="Gating release of inhibition by proteolysis (GRIP); protease-sensitive region that is responsible for the proteolytic activation of the channel" evidence="19">
    <location>
        <begin position="200"/>
        <end position="270"/>
    </location>
</feature>
<feature type="region of interest" description="Disordered" evidence="4">
    <location>
        <begin position="211"/>
        <end position="244"/>
    </location>
</feature>
<feature type="region of interest" description="Disordered" evidence="4">
    <location>
        <begin position="637"/>
        <end position="699"/>
    </location>
</feature>
<feature type="short sequence motif" description="PY motif; recruits WW domain-containing proteins and is thereby required for ubiquitination and inhibition of the channel by NEDD4 and NEDD4L" evidence="1">
    <location>
        <begin position="669"/>
        <end position="673"/>
    </location>
</feature>
<feature type="compositionally biased region" description="Low complexity" evidence="4">
    <location>
        <begin position="227"/>
        <end position="238"/>
    </location>
</feature>
<feature type="compositionally biased region" description="Low complexity" evidence="4">
    <location>
        <begin position="656"/>
        <end position="667"/>
    </location>
</feature>
<feature type="site" description="Cleavage by Furin" evidence="8">
    <location>
        <begin position="205"/>
        <end position="206"/>
    </location>
</feature>
<feature type="site" description="Cleavage by Furin" evidence="8">
    <location>
        <begin position="231"/>
        <end position="232"/>
    </location>
</feature>
<feature type="disulfide bond" evidence="1">
    <location>
        <begin position="158"/>
        <end position="332"/>
    </location>
</feature>
<feature type="disulfide bond" evidence="1">
    <location>
        <begin position="256"/>
        <end position="263"/>
    </location>
</feature>
<feature type="disulfide bond" evidence="1">
    <location>
        <begin position="309"/>
        <end position="316"/>
    </location>
</feature>
<feature type="disulfide bond" evidence="1">
    <location>
        <begin position="421"/>
        <end position="506"/>
    </location>
</feature>
<feature type="disulfide bond" evidence="1">
    <location>
        <begin position="443"/>
        <end position="502"/>
    </location>
</feature>
<feature type="disulfide bond" evidence="1">
    <location>
        <begin position="443"/>
        <end position="483"/>
    </location>
</feature>
<feature type="disulfide bond" evidence="1">
    <location>
        <begin position="447"/>
        <end position="498"/>
    </location>
</feature>
<feature type="disulfide bond" evidence="1">
    <location>
        <begin position="456"/>
        <end position="506"/>
    </location>
</feature>
<feature type="disulfide bond" evidence="1">
    <location>
        <begin position="456"/>
        <end position="483"/>
    </location>
</feature>
<feature type="disulfide bond" evidence="1">
    <location>
        <begin position="458"/>
        <end position="472"/>
    </location>
</feature>
<feature type="sequence conflict" description="In Ref. 3; AAA97412." evidence="17" ref="3">
    <original>H</original>
    <variation>R</variation>
    <location>
        <position position="445"/>
    </location>
</feature>
<feature type="sequence conflict" description="In Ref. 3; AAA97412." evidence="17" ref="3">
    <original>FKE</original>
    <variation>YKH</variation>
    <location>
        <begin position="555"/>
        <end position="557"/>
    </location>
</feature>
<reference key="1">
    <citation type="journal article" date="1999" name="Am. J. Physiol.">
        <title>Cloning and functional expression of the mouse epithelial sodium channel.</title>
        <authorList>
            <person name="Ahn Y.J."/>
            <person name="Brooker D.R."/>
            <person name="Kosari F."/>
            <person name="Harte B.J."/>
            <person name="Li J."/>
            <person name="Mackler S.A."/>
            <person name="Kleyman T.R."/>
        </authorList>
    </citation>
    <scope>NUCLEOTIDE SEQUENCE [MRNA]</scope>
    <scope>FUNCTION</scope>
    <scope>TRANSPORTER ACTIVITY</scope>
    <scope>ACTIVITY REGULATION</scope>
    <scope>SUBUNIT</scope>
    <scope>TISSUE SPECIFICITY</scope>
    <source>
        <strain>C57BL/6J</strain>
        <tissue>Kidney</tissue>
    </source>
</reference>
<reference key="2">
    <citation type="submission" date="2009-01" db="UniProtKB">
        <authorList>
            <person name="Lubec G."/>
            <person name="Sunyer B."/>
            <person name="Chen W.-Q."/>
        </authorList>
    </citation>
    <scope>PROTEIN SEQUENCE OF 432-437</scope>
    <scope>IDENTIFICATION BY MASS SPECTROMETRY</scope>
    <source>
        <strain>OF1</strain>
        <tissue>Hippocampus</tissue>
    </source>
</reference>
<reference key="3">
    <citation type="journal article" date="1997" name="Pediatr. Res.">
        <title>The alpha subunit of the epithelial sodium channel in the mouse: developmental regulation of its expression.</title>
        <authorList>
            <person name="Dagenais A."/>
            <person name="Kothary R."/>
            <person name="Berthiaume Y."/>
        </authorList>
    </citation>
    <scope>NUCLEOTIDE SEQUENCE [MRNA] OF 445-558</scope>
    <source>
        <strain>CD-1</strain>
        <tissue>Kidney</tissue>
    </source>
</reference>
<reference key="4">
    <citation type="journal article" date="1996" name="Nat. Genet.">
        <title>Early death due to defective neonatal lung liquid clearance in alpha-ENaC-deficient mice.</title>
        <authorList>
            <person name="Hummler E."/>
            <person name="Barker P."/>
            <person name="Gatzy J."/>
            <person name="Beermann F."/>
            <person name="Verdumo C."/>
            <person name="Schmidt A."/>
            <person name="Boucher R."/>
            <person name="Rossier B.C."/>
        </authorList>
    </citation>
    <scope>FUNCTION</scope>
    <scope>DISRUPTION PHENOTYPE</scope>
</reference>
<reference key="5">
    <citation type="journal article" date="1997" name="Proc. Natl. Acad. Sci. U.S.A.">
        <title>A mouse model for the renal salt-wasting syndrome pseudohypoaldosteronism.</title>
        <authorList>
            <person name="Hummler E."/>
            <person name="Barker P."/>
            <person name="Talbot C."/>
            <person name="Wang Q."/>
            <person name="Verdumo C."/>
            <person name="Grubb B."/>
            <person name="Gatzy J."/>
            <person name="Burnier M."/>
            <person name="Horisberger J.D."/>
            <person name="Beermann F."/>
            <person name="Boucher R."/>
            <person name="Rossier B.C."/>
        </authorList>
    </citation>
    <scope>FUNCTION</scope>
</reference>
<reference key="6">
    <citation type="journal article" date="2001" name="J. Biol. Chem.">
        <title>The Nedd4-like protein KIAA0439 is a potential regulator of the epithelial sodium channel.</title>
        <authorList>
            <person name="Harvey K.F."/>
            <person name="Dinudom A."/>
            <person name="Cook D.I."/>
            <person name="Kumar S."/>
        </authorList>
    </citation>
    <scope>UBIQUITINATION BY NEDD4 AND NEDD4L</scope>
</reference>
<reference key="7">
    <citation type="journal article" date="2003" name="FASEB J.">
        <title>The role of individual Nedd4-2 (KIAA0439) WW domains in binding and regulating epithelial sodium channels.</title>
        <authorList>
            <person name="Fotia A.B."/>
            <person name="Dinudom A."/>
            <person name="Shearwin K.E."/>
            <person name="Koch J.-P."/>
            <person name="Korbmacher C."/>
            <person name="Cook D.I."/>
            <person name="Kumar S."/>
        </authorList>
    </citation>
    <scope>UBIQUITINATION BY NEDD4L</scope>
</reference>
<reference key="8">
    <citation type="journal article" date="2004" name="J. Biol. Chem.">
        <title>Epithelial sodium channels are activated by furin-dependent proteolysis.</title>
        <authorList>
            <person name="Hughey R.P."/>
            <person name="Bruns J.B."/>
            <person name="Kinlough C.L."/>
            <person name="Harkleroad K.L."/>
            <person name="Tong Q."/>
            <person name="Carattino M.D."/>
            <person name="Johnson J.P."/>
            <person name="Stockand J.D."/>
            <person name="Kleyman T.R."/>
        </authorList>
    </citation>
    <scope>FUNCTION</scope>
    <scope>TRANSPORTER ACTIVITY</scope>
    <scope>SUBUNIT</scope>
    <scope>GLYCOSYLATION</scope>
    <scope>PROTEOLYTIC PROCESSING</scope>
    <scope>CLEAVAGE SITE</scope>
</reference>
<reference key="9">
    <citation type="journal article" date="2004" name="J. Biol. Chem.">
        <title>Regulation of neuronal voltage-gated sodium channels by the ubiquitin-protein ligases Nedd4 and Nedd4-2.</title>
        <authorList>
            <person name="Fotia A.B."/>
            <person name="Ekberg J."/>
            <person name="Adams D.J."/>
            <person name="Cook D.I."/>
            <person name="Poronnik P."/>
            <person name="Kumar S."/>
        </authorList>
    </citation>
    <scope>UBIQUITINATION BY NEDD4 AND NEDD4L</scope>
</reference>
<reference key="10">
    <citation type="journal article" date="2008" name="J. Biol. Chem.">
        <title>Proteolytic processing of the epithelial sodium channel gamma subunit has a dominant role in channel activation.</title>
        <authorList>
            <person name="Carattino M.D."/>
            <person name="Hughey R.P."/>
            <person name="Kleyman T.R."/>
        </authorList>
    </citation>
    <scope>PROTEOLYTIC PROCESSING</scope>
    <scope>REGION</scope>
</reference>
<reference key="11">
    <citation type="journal article" date="2012" name="Histochem. Cell Biol.">
        <title>Epithelial sodium channels (ENaC) are uniformly distributed on motile cilia in the oviduct and the respiratory airways.</title>
        <authorList>
            <person name="Enuka Y."/>
            <person name="Hanukoglu I."/>
            <person name="Edelheit O."/>
            <person name="Vaknine H."/>
            <person name="Hanukoglu A."/>
        </authorList>
    </citation>
    <scope>TISSUE SPECIFICITY</scope>
</reference>
<reference key="12">
    <citation type="journal article" date="2014" name="J. Am. Soc. Nephrol.">
        <title>Colon-specific deletion of epithelial sodium channel causes sodium loss and aldosterone resistance.</title>
        <authorList>
            <person name="Malsure S."/>
            <person name="Wang Q."/>
            <person name="Charles R.P."/>
            <person name="Sergi C."/>
            <person name="Perrier R."/>
            <person name="Christensen B.M."/>
            <person name="Maillard M."/>
            <person name="Rossier B.C."/>
            <person name="Hummler E."/>
        </authorList>
    </citation>
    <scope>FUNCTION</scope>
</reference>
<reference key="13">
    <citation type="journal article" date="2019" name="J. Mol. Histol.">
        <title>Mapping the sites of localization of epithelial sodium channel (ENaC) and CFTR in segments of the mammalian epididymis.</title>
        <authorList>
            <person name="Sharma S."/>
            <person name="Hanukoglu I."/>
        </authorList>
    </citation>
    <scope>TISSUE SPECIFICITY</scope>
</reference>
<comment type="function">
    <text evidence="5 8 12 14 15">This is one of the three pore-forming subunits of the heterotrimeric epithelial sodium channel (ENaC), a critical regulator of sodium balance and fluid homeostasis (PubMed:10409305, PubMed:8589728, PubMed:9326675, PubMed:15007080). ENaC operates in epithelial tissues, where it mediates the electrodiffusion of sodium ions from extracellular fluid through the apical membrane of cells, with water following osmotically (PubMed:24480829, PubMed:8589728, PubMed:9326675). It plays a key role in maintaining sodium homeostasis through electrogenic sodium reabsorption in the kidneys (PubMed:9326675). Additionally, ENaC is essential for airway surface liquid homeostasis, which is crucial for proper mucus clearance (PubMed:8589728).</text>
</comment>
<comment type="catalytic activity">
    <reaction evidence="5 8">
        <text>Na(+)(in) = Na(+)(out)</text>
        <dbReference type="Rhea" id="RHEA:34963"/>
        <dbReference type="ChEBI" id="CHEBI:29101"/>
    </reaction>
</comment>
<comment type="activity regulation">
    <text evidence="5 8">Originally identified and characterized by its inhibition by the diuretic drug amiloride.</text>
</comment>
<comment type="subunit">
    <text evidence="1 8">Heterotrimer; containing an alpha/SCNN1A, a beta/SCNN1B and a gamma/SCNN1G subunit (PubMed:15007080). Interacts with WWP1 (via WW domains). Interacts with WWP2 (via WW domains); inhibits the channel. Interacts with BPIFA1; the interaction is indirect via SCNN1B and inhibits the proteolytic processing of SCNN1A and SCNN1G and the activation of ENaC (By similarity). Interacts with the full-length immature form of PCSK9 (pro-PCSK9) (By similarity).</text>
</comment>
<comment type="subcellular location">
    <subcellularLocation>
        <location evidence="2">Apical cell membrane</location>
        <topology evidence="2">Multi-pass membrane protein</topology>
    </subcellularLocation>
    <subcellularLocation>
        <location evidence="1">Cell projection</location>
        <location evidence="1">Cilium</location>
    </subcellularLocation>
    <subcellularLocation>
        <location evidence="1">Cytoplasmic granule</location>
    </subcellularLocation>
    <subcellularLocation>
        <location evidence="1">Cytoplasm</location>
    </subcellularLocation>
    <subcellularLocation>
        <location evidence="2">Cytoplasmic vesicle</location>
        <location evidence="2">Secretory vesicle</location>
        <location evidence="2">Acrosome</location>
    </subcellularLocation>
    <subcellularLocation>
        <location evidence="2">Cell projection</location>
        <location evidence="2">Cilium</location>
        <location evidence="2">Flagellum</location>
    </subcellularLocation>
    <text evidence="1 2">In the oviduct and bronchus, located on cilia in multi-ciliated cells. In endometrial non-ciliated epithelial cells, restricted to apical surfaces. In epidermis, located nearly uniformly in the cytoplasm in a granular distribution. In sebaceous glands, observed only in the cytoplasmic space in between the lipid vesicles. In eccrine sweat glands, mainly located at the apical surface of the cells facing the lumen. In skin, in arrector pili muscle cells and in adipocytes, located in the cytoplasm and colocalized with actin fibers. In spermatogonia, spermatocytes and round spermatids, located in the cytoplasm. Prior to spermiation, location shifts from the cytoplasm to the spermatid tail. In spermatozoa, localizes at the acrosome and the central region of the sperm flagellum.</text>
</comment>
<comment type="tissue specificity">
    <text evidence="5 11 13">Expressed in kidney (at protein level) (PubMed:22207244). Expressed in lung (at protein level) (PubMed:22207244, PubMed:30659401). Expressed in the epididymis (at protein level) (PubMed:30659401). In the caput and corpus regions of the epididymis, expressed uniformly on the luminal and basal surfaces of the ducts and in the sperm in the duct lumen (PubMed:30659401). Also expressed in distal colon and, at low levels, in liver (PubMed:10409305).</text>
</comment>
<comment type="PTM">
    <text evidence="6 7 9">Ubiquitinated. Can be ubiquitinated at multiple sites and undergo monoubiquitination and polyubiquitination. Ubiquitination by NEDD4 or NEDD4L inhibits the ENaC channel through endocytosis, intracellular retention and degradation of its individual subunits.</text>
</comment>
<comment type="PTM">
    <text evidence="1 10">ENaC is activated through the proteolytic maturation of its subunits. Furin cleaves the SCNN1A subunit, which results in a stepwise increase in the open probability of the channel due to the release of an inhibitory tract (PubMed:18650438). BPIFA1, which is recruited by the SCNN1B subunit, prevents the proteolytic activation of ENaC (By similarity).</text>
</comment>
<comment type="PTM">
    <text evidence="2">N-glycosylated.</text>
</comment>
<comment type="disruption phenotype">
    <text evidence="14">Scnn1a homozygous knockout mice develop respiratory distress and die within 40 hours of birth from failure to clear their lungs of liquid (PubMed:8589728). No other obvious pathological change in organs is observed (PubMed:8589728).</text>
</comment>
<comment type="similarity">
    <text evidence="17">Belongs to the amiloride-sensitive sodium channel (TC 1.A.6) family. SCNN1A subfamily.</text>
</comment>
<organism>
    <name type="scientific">Mus musculus</name>
    <name type="common">Mouse</name>
    <dbReference type="NCBI Taxonomy" id="10090"/>
    <lineage>
        <taxon>Eukaryota</taxon>
        <taxon>Metazoa</taxon>
        <taxon>Chordata</taxon>
        <taxon>Craniata</taxon>
        <taxon>Vertebrata</taxon>
        <taxon>Euteleostomi</taxon>
        <taxon>Mammalia</taxon>
        <taxon>Eutheria</taxon>
        <taxon>Euarchontoglires</taxon>
        <taxon>Glires</taxon>
        <taxon>Rodentia</taxon>
        <taxon>Myomorpha</taxon>
        <taxon>Muroidea</taxon>
        <taxon>Muridae</taxon>
        <taxon>Murinae</taxon>
        <taxon>Mus</taxon>
        <taxon>Mus</taxon>
    </lineage>
</organism>
<name>SCNNA_MOUSE</name>
<proteinExistence type="evidence at protein level"/>
<dbReference type="EMBL" id="AF112185">
    <property type="protein sequence ID" value="AAD21244.1"/>
    <property type="molecule type" value="mRNA"/>
</dbReference>
<dbReference type="EMBL" id="U52006">
    <property type="protein sequence ID" value="AAA97412.1"/>
    <property type="molecule type" value="mRNA"/>
</dbReference>
<dbReference type="CCDS" id="CCDS39641.2"/>
<dbReference type="RefSeq" id="NP_035454.3">
    <property type="nucleotide sequence ID" value="NM_011324.3"/>
</dbReference>
<dbReference type="SMR" id="Q61180"/>
<dbReference type="BioGRID" id="203105">
    <property type="interactions" value="7"/>
</dbReference>
<dbReference type="ComplexPortal" id="CPX-315">
    <property type="entry name" value="Amiloride-sensitive sodium channel complex, alpha-beta-gamma"/>
</dbReference>
<dbReference type="DIP" id="DIP-40889N"/>
<dbReference type="FunCoup" id="Q61180">
    <property type="interactions" value="138"/>
</dbReference>
<dbReference type="IntAct" id="Q61180">
    <property type="interactions" value="1"/>
</dbReference>
<dbReference type="STRING" id="10090.ENSMUSP00000080164"/>
<dbReference type="BindingDB" id="Q61180"/>
<dbReference type="ChEMBL" id="CHEMBL3608200"/>
<dbReference type="GuidetoPHARMACOLOGY" id="738"/>
<dbReference type="iPTMnet" id="Q61180"/>
<dbReference type="PhosphoSitePlus" id="Q61180"/>
<dbReference type="PaxDb" id="10090-ENSMUSP00000080164"/>
<dbReference type="ProteomicsDB" id="255363"/>
<dbReference type="DNASU" id="20276"/>
<dbReference type="Ensembl" id="ENSMUST00000081440.14">
    <property type="protein sequence ID" value="ENSMUSP00000080164.9"/>
    <property type="gene ID" value="ENSMUSG00000030340.17"/>
</dbReference>
<dbReference type="GeneID" id="20276"/>
<dbReference type="KEGG" id="mmu:20276"/>
<dbReference type="AGR" id="MGI:101782"/>
<dbReference type="CTD" id="6337"/>
<dbReference type="MGI" id="MGI:101782">
    <property type="gene designation" value="Scnn1a"/>
</dbReference>
<dbReference type="eggNOG" id="KOG4294">
    <property type="taxonomic scope" value="Eukaryota"/>
</dbReference>
<dbReference type="GeneTree" id="ENSGT00940000160952"/>
<dbReference type="InParanoid" id="Q61180"/>
<dbReference type="OMA" id="MRQCKQE"/>
<dbReference type="OrthoDB" id="6238402at2759"/>
<dbReference type="PhylomeDB" id="Q61180"/>
<dbReference type="Reactome" id="R-MMU-2672351">
    <property type="pathway name" value="Stimuli-sensing channels"/>
</dbReference>
<dbReference type="Reactome" id="R-MMU-9730628">
    <property type="pathway name" value="Sensory perception of salty taste"/>
</dbReference>
<dbReference type="BioGRID-ORCS" id="20276">
    <property type="hits" value="6 hits in 78 CRISPR screens"/>
</dbReference>
<dbReference type="ChiTaRS" id="Scnn1a">
    <property type="organism name" value="mouse"/>
</dbReference>
<dbReference type="PRO" id="PR:Q61180"/>
<dbReference type="Proteomes" id="UP000000589">
    <property type="component" value="Chromosome 6"/>
</dbReference>
<dbReference type="RNAct" id="Q61180">
    <property type="molecule type" value="protein"/>
</dbReference>
<dbReference type="GO" id="GO:0001669">
    <property type="term" value="C:acrosomal vesicle"/>
    <property type="evidence" value="ECO:0000250"/>
    <property type="project" value="UniProtKB"/>
</dbReference>
<dbReference type="GO" id="GO:0016324">
    <property type="term" value="C:apical plasma membrane"/>
    <property type="evidence" value="ECO:0000250"/>
    <property type="project" value="UniProtKB"/>
</dbReference>
<dbReference type="GO" id="GO:0060170">
    <property type="term" value="C:ciliary membrane"/>
    <property type="evidence" value="ECO:0000250"/>
    <property type="project" value="UniProtKB"/>
</dbReference>
<dbReference type="GO" id="GO:0005737">
    <property type="term" value="C:cytoplasm"/>
    <property type="evidence" value="ECO:0000250"/>
    <property type="project" value="UniProtKB"/>
</dbReference>
<dbReference type="GO" id="GO:0005829">
    <property type="term" value="C:cytosol"/>
    <property type="evidence" value="ECO:0000314"/>
    <property type="project" value="MGI"/>
</dbReference>
<dbReference type="GO" id="GO:0009897">
    <property type="term" value="C:external side of plasma membrane"/>
    <property type="evidence" value="ECO:0000314"/>
    <property type="project" value="MGI"/>
</dbReference>
<dbReference type="GO" id="GO:0070062">
    <property type="term" value="C:extracellular exosome"/>
    <property type="evidence" value="ECO:0007669"/>
    <property type="project" value="Ensembl"/>
</dbReference>
<dbReference type="GO" id="GO:0016020">
    <property type="term" value="C:membrane"/>
    <property type="evidence" value="ECO:0000314"/>
    <property type="project" value="MGI"/>
</dbReference>
<dbReference type="GO" id="GO:0031514">
    <property type="term" value="C:motile cilium"/>
    <property type="evidence" value="ECO:0000250"/>
    <property type="project" value="UniProtKB"/>
</dbReference>
<dbReference type="GO" id="GO:0005886">
    <property type="term" value="C:plasma membrane"/>
    <property type="evidence" value="ECO:0000250"/>
    <property type="project" value="UniProtKB"/>
</dbReference>
<dbReference type="GO" id="GO:0034706">
    <property type="term" value="C:sodium channel complex"/>
    <property type="evidence" value="ECO:0000314"/>
    <property type="project" value="MGI"/>
</dbReference>
<dbReference type="GO" id="GO:0097228">
    <property type="term" value="C:sperm principal piece"/>
    <property type="evidence" value="ECO:0000250"/>
    <property type="project" value="UniProtKB"/>
</dbReference>
<dbReference type="GO" id="GO:0015280">
    <property type="term" value="F:ligand-gated sodium channel activity"/>
    <property type="evidence" value="ECO:0007669"/>
    <property type="project" value="InterPro"/>
</dbReference>
<dbReference type="GO" id="GO:0005272">
    <property type="term" value="F:sodium channel activity"/>
    <property type="evidence" value="ECO:0000314"/>
    <property type="project" value="MGI"/>
</dbReference>
<dbReference type="GO" id="GO:0050699">
    <property type="term" value="F:WW domain binding"/>
    <property type="evidence" value="ECO:0000353"/>
    <property type="project" value="MGI"/>
</dbReference>
<dbReference type="GO" id="GO:0071468">
    <property type="term" value="P:cellular response to acidic pH"/>
    <property type="evidence" value="ECO:0007669"/>
    <property type="project" value="Ensembl"/>
</dbReference>
<dbReference type="GO" id="GO:1904045">
    <property type="term" value="P:cellular response to aldosterone"/>
    <property type="evidence" value="ECO:0000314"/>
    <property type="project" value="MGI"/>
</dbReference>
<dbReference type="GO" id="GO:1904117">
    <property type="term" value="P:cellular response to vasopressin"/>
    <property type="evidence" value="ECO:0000303"/>
    <property type="project" value="ComplexPortal"/>
</dbReference>
<dbReference type="GO" id="GO:0006883">
    <property type="term" value="P:intracellular sodium ion homeostasis"/>
    <property type="evidence" value="ECO:0000314"/>
    <property type="project" value="ComplexPortal"/>
</dbReference>
<dbReference type="GO" id="GO:0050891">
    <property type="term" value="P:multicellular organismal-level water homeostasis"/>
    <property type="evidence" value="ECO:0000250"/>
    <property type="project" value="UniProtKB"/>
</dbReference>
<dbReference type="GO" id="GO:0008217">
    <property type="term" value="P:regulation of blood pressure"/>
    <property type="evidence" value="ECO:0000303"/>
    <property type="project" value="ComplexPortal"/>
</dbReference>
<dbReference type="GO" id="GO:0050914">
    <property type="term" value="P:sensory perception of salty taste"/>
    <property type="evidence" value="ECO:0000303"/>
    <property type="project" value="ComplexPortal"/>
</dbReference>
<dbReference type="GO" id="GO:0050915">
    <property type="term" value="P:sensory perception of sour taste"/>
    <property type="evidence" value="ECO:0000303"/>
    <property type="project" value="ComplexPortal"/>
</dbReference>
<dbReference type="GO" id="GO:0055078">
    <property type="term" value="P:sodium ion homeostasis"/>
    <property type="evidence" value="ECO:0000250"/>
    <property type="project" value="UniProtKB"/>
</dbReference>
<dbReference type="GO" id="GO:0098719">
    <property type="term" value="P:sodium ion import across plasma membrane"/>
    <property type="evidence" value="ECO:0000314"/>
    <property type="project" value="ComplexPortal"/>
</dbReference>
<dbReference type="GO" id="GO:0006814">
    <property type="term" value="P:sodium ion transport"/>
    <property type="evidence" value="ECO:0000314"/>
    <property type="project" value="MGI"/>
</dbReference>
<dbReference type="FunFam" id="2.60.470.10:FF:000002">
    <property type="entry name" value="Amiloride-sensitive sodium channel subunit alpha"/>
    <property type="match status" value="1"/>
</dbReference>
<dbReference type="FunFam" id="1.10.287.770:FF:000002">
    <property type="entry name" value="Amiloride-sensitive sodium channel subunit beta 1"/>
    <property type="match status" value="1"/>
</dbReference>
<dbReference type="Gene3D" id="2.60.470.10">
    <property type="entry name" value="Acid-sensing ion channels like domains"/>
    <property type="match status" value="1"/>
</dbReference>
<dbReference type="Gene3D" id="1.10.287.770">
    <property type="entry name" value="YojJ-like"/>
    <property type="match status" value="1"/>
</dbReference>
<dbReference type="InterPro" id="IPR001873">
    <property type="entry name" value="ENaC"/>
</dbReference>
<dbReference type="InterPro" id="IPR004724">
    <property type="entry name" value="ENaC_chordates"/>
</dbReference>
<dbReference type="InterPro" id="IPR020903">
    <property type="entry name" value="ENaC_CS"/>
</dbReference>
<dbReference type="NCBIfam" id="TIGR00859">
    <property type="entry name" value="ENaC"/>
    <property type="match status" value="1"/>
</dbReference>
<dbReference type="PANTHER" id="PTHR11690:SF124">
    <property type="entry name" value="AMILORIDE-SENSITIVE SODIUM CHANNEL SUBUNIT ALPHA"/>
    <property type="match status" value="1"/>
</dbReference>
<dbReference type="PANTHER" id="PTHR11690">
    <property type="entry name" value="AMILORIDE-SENSITIVE SODIUM CHANNEL-RELATED"/>
    <property type="match status" value="1"/>
</dbReference>
<dbReference type="Pfam" id="PF00858">
    <property type="entry name" value="ASC"/>
    <property type="match status" value="1"/>
</dbReference>
<dbReference type="PRINTS" id="PR01078">
    <property type="entry name" value="AMINACHANNEL"/>
</dbReference>
<dbReference type="PROSITE" id="PS01206">
    <property type="entry name" value="ASC"/>
    <property type="match status" value="1"/>
</dbReference>